<reference key="1">
    <citation type="journal article" date="2006" name="J. Bacteriol.">
        <title>Pathogenomic sequence analysis of Bacillus cereus and Bacillus thuringiensis isolates closely related to Bacillus anthracis.</title>
        <authorList>
            <person name="Han C.S."/>
            <person name="Xie G."/>
            <person name="Challacombe J.F."/>
            <person name="Altherr M.R."/>
            <person name="Bhotika S.S."/>
            <person name="Bruce D."/>
            <person name="Campbell C.S."/>
            <person name="Campbell M.L."/>
            <person name="Chen J."/>
            <person name="Chertkov O."/>
            <person name="Cleland C."/>
            <person name="Dimitrijevic M."/>
            <person name="Doggett N.A."/>
            <person name="Fawcett J.J."/>
            <person name="Glavina T."/>
            <person name="Goodwin L.A."/>
            <person name="Hill K.K."/>
            <person name="Hitchcock P."/>
            <person name="Jackson P.J."/>
            <person name="Keim P."/>
            <person name="Kewalramani A.R."/>
            <person name="Longmire J."/>
            <person name="Lucas S."/>
            <person name="Malfatti S."/>
            <person name="McMurry K."/>
            <person name="Meincke L.J."/>
            <person name="Misra M."/>
            <person name="Moseman B.L."/>
            <person name="Mundt M."/>
            <person name="Munk A.C."/>
            <person name="Okinaka R.T."/>
            <person name="Parson-Quintana B."/>
            <person name="Reilly L.P."/>
            <person name="Richardson P."/>
            <person name="Robinson D.L."/>
            <person name="Rubin E."/>
            <person name="Saunders E."/>
            <person name="Tapia R."/>
            <person name="Tesmer J.G."/>
            <person name="Thayer N."/>
            <person name="Thompson L.S."/>
            <person name="Tice H."/>
            <person name="Ticknor L.O."/>
            <person name="Wills P.L."/>
            <person name="Brettin T.S."/>
            <person name="Gilna P."/>
        </authorList>
    </citation>
    <scope>NUCLEOTIDE SEQUENCE [LARGE SCALE GENOMIC DNA]</scope>
    <source>
        <strain>97-27</strain>
    </source>
</reference>
<keyword id="KW-0067">ATP-binding</keyword>
<keyword id="KW-0315">Glutamine amidotransferase</keyword>
<keyword id="KW-0332">GMP biosynthesis</keyword>
<keyword id="KW-0436">Ligase</keyword>
<keyword id="KW-0547">Nucleotide-binding</keyword>
<keyword id="KW-0658">Purine biosynthesis</keyword>
<accession>Q6HPC6</accession>
<dbReference type="EC" id="6.3.5.2" evidence="1"/>
<dbReference type="EMBL" id="AE017355">
    <property type="protein sequence ID" value="AAT58957.1"/>
    <property type="molecule type" value="Genomic_DNA"/>
</dbReference>
<dbReference type="RefSeq" id="YP_034594.1">
    <property type="nucleotide sequence ID" value="NC_005957.1"/>
</dbReference>
<dbReference type="SMR" id="Q6HPC6"/>
<dbReference type="MEROPS" id="C26.957"/>
<dbReference type="KEGG" id="btk:BT9727_0240"/>
<dbReference type="PATRIC" id="fig|281309.8.peg.256"/>
<dbReference type="HOGENOM" id="CLU_014340_0_5_9"/>
<dbReference type="UniPathway" id="UPA00189">
    <property type="reaction ID" value="UER00296"/>
</dbReference>
<dbReference type="Proteomes" id="UP000001301">
    <property type="component" value="Chromosome"/>
</dbReference>
<dbReference type="GO" id="GO:0005829">
    <property type="term" value="C:cytosol"/>
    <property type="evidence" value="ECO:0007669"/>
    <property type="project" value="TreeGrafter"/>
</dbReference>
<dbReference type="GO" id="GO:0005524">
    <property type="term" value="F:ATP binding"/>
    <property type="evidence" value="ECO:0007669"/>
    <property type="project" value="UniProtKB-UniRule"/>
</dbReference>
<dbReference type="GO" id="GO:0003921">
    <property type="term" value="F:GMP synthase activity"/>
    <property type="evidence" value="ECO:0007669"/>
    <property type="project" value="InterPro"/>
</dbReference>
<dbReference type="CDD" id="cd01742">
    <property type="entry name" value="GATase1_GMP_Synthase"/>
    <property type="match status" value="1"/>
</dbReference>
<dbReference type="CDD" id="cd01997">
    <property type="entry name" value="GMP_synthase_C"/>
    <property type="match status" value="1"/>
</dbReference>
<dbReference type="FunFam" id="3.30.300.10:FF:000002">
    <property type="entry name" value="GMP synthase [glutamine-hydrolyzing]"/>
    <property type="match status" value="1"/>
</dbReference>
<dbReference type="FunFam" id="3.40.50.620:FF:000001">
    <property type="entry name" value="GMP synthase [glutamine-hydrolyzing]"/>
    <property type="match status" value="1"/>
</dbReference>
<dbReference type="FunFam" id="3.40.50.880:FF:000001">
    <property type="entry name" value="GMP synthase [glutamine-hydrolyzing]"/>
    <property type="match status" value="1"/>
</dbReference>
<dbReference type="Gene3D" id="3.30.300.10">
    <property type="match status" value="1"/>
</dbReference>
<dbReference type="Gene3D" id="3.40.50.880">
    <property type="match status" value="1"/>
</dbReference>
<dbReference type="Gene3D" id="3.40.50.620">
    <property type="entry name" value="HUPs"/>
    <property type="match status" value="1"/>
</dbReference>
<dbReference type="HAMAP" id="MF_00344">
    <property type="entry name" value="GMP_synthase"/>
    <property type="match status" value="1"/>
</dbReference>
<dbReference type="InterPro" id="IPR029062">
    <property type="entry name" value="Class_I_gatase-like"/>
</dbReference>
<dbReference type="InterPro" id="IPR017926">
    <property type="entry name" value="GATASE"/>
</dbReference>
<dbReference type="InterPro" id="IPR001674">
    <property type="entry name" value="GMP_synth_C"/>
</dbReference>
<dbReference type="InterPro" id="IPR004739">
    <property type="entry name" value="GMP_synth_GATase"/>
</dbReference>
<dbReference type="InterPro" id="IPR022955">
    <property type="entry name" value="GMP_synthase"/>
</dbReference>
<dbReference type="InterPro" id="IPR025777">
    <property type="entry name" value="GMPS_ATP_PPase_dom"/>
</dbReference>
<dbReference type="InterPro" id="IPR022310">
    <property type="entry name" value="NAD/GMP_synthase"/>
</dbReference>
<dbReference type="InterPro" id="IPR014729">
    <property type="entry name" value="Rossmann-like_a/b/a_fold"/>
</dbReference>
<dbReference type="NCBIfam" id="TIGR00884">
    <property type="entry name" value="guaA_Cterm"/>
    <property type="match status" value="1"/>
</dbReference>
<dbReference type="NCBIfam" id="TIGR00888">
    <property type="entry name" value="guaA_Nterm"/>
    <property type="match status" value="1"/>
</dbReference>
<dbReference type="NCBIfam" id="NF000848">
    <property type="entry name" value="PRK00074.1"/>
    <property type="match status" value="1"/>
</dbReference>
<dbReference type="PANTHER" id="PTHR11922:SF2">
    <property type="entry name" value="GMP SYNTHASE [GLUTAMINE-HYDROLYZING]"/>
    <property type="match status" value="1"/>
</dbReference>
<dbReference type="PANTHER" id="PTHR11922">
    <property type="entry name" value="GMP SYNTHASE-RELATED"/>
    <property type="match status" value="1"/>
</dbReference>
<dbReference type="Pfam" id="PF00117">
    <property type="entry name" value="GATase"/>
    <property type="match status" value="1"/>
</dbReference>
<dbReference type="Pfam" id="PF00958">
    <property type="entry name" value="GMP_synt_C"/>
    <property type="match status" value="1"/>
</dbReference>
<dbReference type="Pfam" id="PF02540">
    <property type="entry name" value="NAD_synthase"/>
    <property type="match status" value="1"/>
</dbReference>
<dbReference type="PRINTS" id="PR00097">
    <property type="entry name" value="ANTSNTHASEII"/>
</dbReference>
<dbReference type="PRINTS" id="PR00099">
    <property type="entry name" value="CPSGATASE"/>
</dbReference>
<dbReference type="PRINTS" id="PR00096">
    <property type="entry name" value="GATASE"/>
</dbReference>
<dbReference type="SUPFAM" id="SSF52402">
    <property type="entry name" value="Adenine nucleotide alpha hydrolases-like"/>
    <property type="match status" value="1"/>
</dbReference>
<dbReference type="SUPFAM" id="SSF52317">
    <property type="entry name" value="Class I glutamine amidotransferase-like"/>
    <property type="match status" value="1"/>
</dbReference>
<dbReference type="SUPFAM" id="SSF54810">
    <property type="entry name" value="GMP synthetase C-terminal dimerisation domain"/>
    <property type="match status" value="1"/>
</dbReference>
<dbReference type="PROSITE" id="PS51273">
    <property type="entry name" value="GATASE_TYPE_1"/>
    <property type="match status" value="1"/>
</dbReference>
<dbReference type="PROSITE" id="PS51553">
    <property type="entry name" value="GMPS_ATP_PPASE"/>
    <property type="match status" value="1"/>
</dbReference>
<organism>
    <name type="scientific">Bacillus thuringiensis subsp. konkukian (strain 97-27)</name>
    <dbReference type="NCBI Taxonomy" id="281309"/>
    <lineage>
        <taxon>Bacteria</taxon>
        <taxon>Bacillati</taxon>
        <taxon>Bacillota</taxon>
        <taxon>Bacilli</taxon>
        <taxon>Bacillales</taxon>
        <taxon>Bacillaceae</taxon>
        <taxon>Bacillus</taxon>
        <taxon>Bacillus cereus group</taxon>
    </lineage>
</organism>
<comment type="function">
    <text evidence="1">Catalyzes the synthesis of GMP from XMP.</text>
</comment>
<comment type="catalytic activity">
    <reaction evidence="1">
        <text>XMP + L-glutamine + ATP + H2O = GMP + L-glutamate + AMP + diphosphate + 2 H(+)</text>
        <dbReference type="Rhea" id="RHEA:11680"/>
        <dbReference type="ChEBI" id="CHEBI:15377"/>
        <dbReference type="ChEBI" id="CHEBI:15378"/>
        <dbReference type="ChEBI" id="CHEBI:29985"/>
        <dbReference type="ChEBI" id="CHEBI:30616"/>
        <dbReference type="ChEBI" id="CHEBI:33019"/>
        <dbReference type="ChEBI" id="CHEBI:57464"/>
        <dbReference type="ChEBI" id="CHEBI:58115"/>
        <dbReference type="ChEBI" id="CHEBI:58359"/>
        <dbReference type="ChEBI" id="CHEBI:456215"/>
        <dbReference type="EC" id="6.3.5.2"/>
    </reaction>
</comment>
<comment type="pathway">
    <text evidence="1">Purine metabolism; GMP biosynthesis; GMP from XMP (L-Gln route): step 1/1.</text>
</comment>
<comment type="subunit">
    <text evidence="1">Homodimer.</text>
</comment>
<sequence length="515" mass="57567">MIILKKQHDTIIVLDFGSQYNQLIARRIREFGVYSELHPHTITAEEIKAMNPKGIIFSGGPNSVYGEGALHCDEKIFDLGLPIFGICYGMQLMTQQFGGTVERANHREYGKAVLKVENESKLYANLPEEQVVWMSHGDLVTGLPEGFVVDATSESCPIAGMSNEAKNLYGVQFHPEVRHSEHGNDLIKNFVFGVCGCSEGWNMENFIEVELEKIRETVGDKKVLCALSGGVDSSVVAVLIHKAIGDQLTCIFVDHGLLRKGEAEGVMKTFSEGFHMNVIKVDAKERFMNKLKGVEDPEQKRKIIGNEFIYVFDDEASKLEGMDFLAQGTLYTDIVESGTATAQTIKSHHNVGGLPEDMQFKLIEPLNTLFKDEVRVLGSELGIPDEIVWRQPFPGPGLGIRVLGEITEEKLEIVRESDAILREEITKAGLDREIWQYFTALPGMRSVGVMGDERTYDYTVGIRAVTSIDGMTADWARIPWDVLEKISVRIVNEVKHVNRIVYDVTSKPPATIEWE</sequence>
<protein>
    <recommendedName>
        <fullName evidence="1">GMP synthase [glutamine-hydrolyzing]</fullName>
        <ecNumber evidence="1">6.3.5.2</ecNumber>
    </recommendedName>
    <alternativeName>
        <fullName evidence="1">GMP synthetase</fullName>
    </alternativeName>
    <alternativeName>
        <fullName evidence="1">Glutamine amidotransferase</fullName>
    </alternativeName>
</protein>
<gene>
    <name evidence="1" type="primary">guaA</name>
    <name type="ordered locus">BT9727_0240</name>
</gene>
<proteinExistence type="inferred from homology"/>
<feature type="chain" id="PRO_0000229402" description="GMP synthase [glutamine-hydrolyzing]">
    <location>
        <begin position="1"/>
        <end position="515"/>
    </location>
</feature>
<feature type="domain" description="Glutamine amidotransferase type-1" evidence="1">
    <location>
        <begin position="10"/>
        <end position="200"/>
    </location>
</feature>
<feature type="domain" description="GMPS ATP-PPase" evidence="1">
    <location>
        <begin position="201"/>
        <end position="390"/>
    </location>
</feature>
<feature type="active site" description="Nucleophile" evidence="1">
    <location>
        <position position="87"/>
    </location>
</feature>
<feature type="active site" evidence="1">
    <location>
        <position position="174"/>
    </location>
</feature>
<feature type="active site" evidence="1">
    <location>
        <position position="176"/>
    </location>
</feature>
<feature type="binding site" evidence="1">
    <location>
        <begin position="228"/>
        <end position="234"/>
    </location>
    <ligand>
        <name>ATP</name>
        <dbReference type="ChEBI" id="CHEBI:30616"/>
    </ligand>
</feature>
<name>GUAA_BACHK</name>
<evidence type="ECO:0000255" key="1">
    <source>
        <dbReference type="HAMAP-Rule" id="MF_00344"/>
    </source>
</evidence>